<sequence length="204" mass="22888">MSAMRLFALTSAMLPLAFILSTSPFPATAAEKNVIVEQRNASSSPKQRLDQLFSQLKRERDPDKASSIANEIRLEWNDSGSATINLLMQWADKAIEEKRNPAALDFLDEAIALKPDYAESWNRRATLNFVMGNYRKSMSDIEHVLNIEPRHFGALSGMAAILSNSGNDQLTLKAWERFLDIYPADRTAQEQVNMLAEKLAGNRT</sequence>
<evidence type="ECO:0000255" key="1"/>
<gene>
    <name type="ordered locus">RHE_CH03534.1</name>
    <name type="ORF">RHE_CH03534</name>
</gene>
<name>Y3534_RHIEC</name>
<proteinExistence type="inferred from homology"/>
<accession>Q2K4E6</accession>
<protein>
    <recommendedName>
        <fullName>TPR repeat-containing protein RHE_CH03534.1</fullName>
    </recommendedName>
</protein>
<reference key="1">
    <citation type="journal article" date="2006" name="Proc. Natl. Acad. Sci. U.S.A.">
        <title>The partitioned Rhizobium etli genome: genetic and metabolic redundancy in seven interacting replicons.</title>
        <authorList>
            <person name="Gonzalez V."/>
            <person name="Santamaria R.I."/>
            <person name="Bustos P."/>
            <person name="Hernandez-Gonzalez I."/>
            <person name="Medrano-Soto A."/>
            <person name="Moreno-Hagelsieb G."/>
            <person name="Janga S.C."/>
            <person name="Ramirez M.A."/>
            <person name="Jimenez-Jacinto V."/>
            <person name="Collado-Vides J."/>
            <person name="Davila G."/>
        </authorList>
    </citation>
    <scope>NUCLEOTIDE SEQUENCE [LARGE SCALE GENOMIC DNA]</scope>
    <source>
        <strain>ATCC 51251 / DSM 11541 / JCM 21823 / NBRC 15573 / CFN 42</strain>
    </source>
</reference>
<organism>
    <name type="scientific">Rhizobium etli (strain ATCC 51251 / DSM 11541 / JCM 21823 / NBRC 15573 / CFN 42)</name>
    <dbReference type="NCBI Taxonomy" id="347834"/>
    <lineage>
        <taxon>Bacteria</taxon>
        <taxon>Pseudomonadati</taxon>
        <taxon>Pseudomonadota</taxon>
        <taxon>Alphaproteobacteria</taxon>
        <taxon>Hyphomicrobiales</taxon>
        <taxon>Rhizobiaceae</taxon>
        <taxon>Rhizobium/Agrobacterium group</taxon>
        <taxon>Rhizobium</taxon>
    </lineage>
</organism>
<keyword id="KW-1185">Reference proteome</keyword>
<keyword id="KW-0677">Repeat</keyword>
<keyword id="KW-0732">Signal</keyword>
<keyword id="KW-0802">TPR repeat</keyword>
<dbReference type="EMBL" id="CP000133">
    <property type="protein sequence ID" value="ABC92290.1"/>
    <property type="molecule type" value="Genomic_DNA"/>
</dbReference>
<dbReference type="RefSeq" id="WP_011426753.1">
    <property type="nucleotide sequence ID" value="NC_007761.1"/>
</dbReference>
<dbReference type="SMR" id="Q2K4E6"/>
<dbReference type="eggNOG" id="COG0457">
    <property type="taxonomic scope" value="Bacteria"/>
</dbReference>
<dbReference type="HOGENOM" id="CLU_079829_1_0_5"/>
<dbReference type="OrthoDB" id="9815010at2"/>
<dbReference type="Proteomes" id="UP000001936">
    <property type="component" value="Chromosome"/>
</dbReference>
<dbReference type="Gene3D" id="1.25.40.10">
    <property type="entry name" value="Tetratricopeptide repeat domain"/>
    <property type="match status" value="1"/>
</dbReference>
<dbReference type="InterPro" id="IPR011990">
    <property type="entry name" value="TPR-like_helical_dom_sf"/>
</dbReference>
<dbReference type="InterPro" id="IPR019734">
    <property type="entry name" value="TPR_rpt"/>
</dbReference>
<dbReference type="SMART" id="SM00028">
    <property type="entry name" value="TPR"/>
    <property type="match status" value="3"/>
</dbReference>
<dbReference type="SUPFAM" id="SSF48452">
    <property type="entry name" value="TPR-like"/>
    <property type="match status" value="1"/>
</dbReference>
<dbReference type="PROSITE" id="PS50005">
    <property type="entry name" value="TPR"/>
    <property type="match status" value="3"/>
</dbReference>
<dbReference type="PROSITE" id="PS50293">
    <property type="entry name" value="TPR_REGION"/>
    <property type="match status" value="1"/>
</dbReference>
<feature type="signal peptide" evidence="1">
    <location>
        <begin position="1"/>
        <end position="29"/>
    </location>
</feature>
<feature type="chain" id="PRO_0000239047" description="TPR repeat-containing protein RHE_CH03534.1">
    <location>
        <begin position="30"/>
        <end position="204"/>
    </location>
</feature>
<feature type="repeat" description="TPR 1">
    <location>
        <begin position="84"/>
        <end position="117"/>
    </location>
</feature>
<feature type="repeat" description="TPR 2">
    <location>
        <begin position="118"/>
        <end position="151"/>
    </location>
</feature>
<feature type="repeat" description="TPR 3">
    <location>
        <begin position="153"/>
        <end position="185"/>
    </location>
</feature>